<reference key="1">
    <citation type="journal article" date="2008" name="J. Biotechnol.">
        <title>The lifestyle of Corynebacterium urealyticum derived from its complete genome sequence established by pyrosequencing.</title>
        <authorList>
            <person name="Tauch A."/>
            <person name="Trost E."/>
            <person name="Tilker A."/>
            <person name="Ludewig U."/>
            <person name="Schneiker S."/>
            <person name="Goesmann A."/>
            <person name="Arnold W."/>
            <person name="Bekel T."/>
            <person name="Brinkrolf K."/>
            <person name="Brune I."/>
            <person name="Goetker S."/>
            <person name="Kalinowski J."/>
            <person name="Kamp P.-B."/>
            <person name="Lobo F.P."/>
            <person name="Viehoever P."/>
            <person name="Weisshaar B."/>
            <person name="Soriano F."/>
            <person name="Droege M."/>
            <person name="Puehler A."/>
        </authorList>
    </citation>
    <scope>NUCLEOTIDE SEQUENCE [LARGE SCALE GENOMIC DNA]</scope>
    <source>
        <strain>ATCC 43042 / DSM 7109</strain>
    </source>
</reference>
<dbReference type="EMBL" id="AM942444">
    <property type="protein sequence ID" value="CAQ04811.1"/>
    <property type="molecule type" value="Genomic_DNA"/>
</dbReference>
<dbReference type="RefSeq" id="WP_012360100.1">
    <property type="nucleotide sequence ID" value="NC_010545.1"/>
</dbReference>
<dbReference type="SMR" id="B1VGC2"/>
<dbReference type="STRING" id="504474.cu0851"/>
<dbReference type="GeneID" id="60603627"/>
<dbReference type="KEGG" id="cur:cu0851"/>
<dbReference type="eggNOG" id="COG0532">
    <property type="taxonomic scope" value="Bacteria"/>
</dbReference>
<dbReference type="HOGENOM" id="CLU_006301_9_0_11"/>
<dbReference type="Proteomes" id="UP000001727">
    <property type="component" value="Chromosome"/>
</dbReference>
<dbReference type="GO" id="GO:0005829">
    <property type="term" value="C:cytosol"/>
    <property type="evidence" value="ECO:0007669"/>
    <property type="project" value="TreeGrafter"/>
</dbReference>
<dbReference type="GO" id="GO:0005525">
    <property type="term" value="F:GTP binding"/>
    <property type="evidence" value="ECO:0007669"/>
    <property type="project" value="UniProtKB-KW"/>
</dbReference>
<dbReference type="GO" id="GO:0003924">
    <property type="term" value="F:GTPase activity"/>
    <property type="evidence" value="ECO:0007669"/>
    <property type="project" value="UniProtKB-UniRule"/>
</dbReference>
<dbReference type="GO" id="GO:0003743">
    <property type="term" value="F:translation initiation factor activity"/>
    <property type="evidence" value="ECO:0007669"/>
    <property type="project" value="UniProtKB-UniRule"/>
</dbReference>
<dbReference type="CDD" id="cd01887">
    <property type="entry name" value="IF2_eIF5B"/>
    <property type="match status" value="1"/>
</dbReference>
<dbReference type="CDD" id="cd03702">
    <property type="entry name" value="IF2_mtIF2_II"/>
    <property type="match status" value="1"/>
</dbReference>
<dbReference type="CDD" id="cd03692">
    <property type="entry name" value="mtIF2_IVc"/>
    <property type="match status" value="1"/>
</dbReference>
<dbReference type="FunFam" id="2.40.30.10:FF:000007">
    <property type="entry name" value="Translation initiation factor IF-2"/>
    <property type="match status" value="1"/>
</dbReference>
<dbReference type="FunFam" id="2.40.30.10:FF:000008">
    <property type="entry name" value="Translation initiation factor IF-2"/>
    <property type="match status" value="1"/>
</dbReference>
<dbReference type="FunFam" id="3.40.50.10050:FF:000001">
    <property type="entry name" value="Translation initiation factor IF-2"/>
    <property type="match status" value="1"/>
</dbReference>
<dbReference type="FunFam" id="3.40.50.300:FF:000019">
    <property type="entry name" value="Translation initiation factor IF-2"/>
    <property type="match status" value="1"/>
</dbReference>
<dbReference type="Gene3D" id="1.10.10.2480">
    <property type="match status" value="1"/>
</dbReference>
<dbReference type="Gene3D" id="3.40.50.300">
    <property type="entry name" value="P-loop containing nucleotide triphosphate hydrolases"/>
    <property type="match status" value="1"/>
</dbReference>
<dbReference type="Gene3D" id="2.40.30.10">
    <property type="entry name" value="Translation factors"/>
    <property type="match status" value="2"/>
</dbReference>
<dbReference type="Gene3D" id="3.40.50.10050">
    <property type="entry name" value="Translation initiation factor IF- 2, domain 3"/>
    <property type="match status" value="1"/>
</dbReference>
<dbReference type="HAMAP" id="MF_00100_B">
    <property type="entry name" value="IF_2_B"/>
    <property type="match status" value="1"/>
</dbReference>
<dbReference type="InterPro" id="IPR053905">
    <property type="entry name" value="EF-G-like_DII"/>
</dbReference>
<dbReference type="InterPro" id="IPR044145">
    <property type="entry name" value="IF2_II"/>
</dbReference>
<dbReference type="InterPro" id="IPR006847">
    <property type="entry name" value="IF2_N"/>
</dbReference>
<dbReference type="InterPro" id="IPR027417">
    <property type="entry name" value="P-loop_NTPase"/>
</dbReference>
<dbReference type="InterPro" id="IPR005225">
    <property type="entry name" value="Small_GTP-bd"/>
</dbReference>
<dbReference type="InterPro" id="IPR000795">
    <property type="entry name" value="T_Tr_GTP-bd_dom"/>
</dbReference>
<dbReference type="InterPro" id="IPR000178">
    <property type="entry name" value="TF_IF2_bacterial-like"/>
</dbReference>
<dbReference type="InterPro" id="IPR015760">
    <property type="entry name" value="TIF_IF2"/>
</dbReference>
<dbReference type="InterPro" id="IPR023115">
    <property type="entry name" value="TIF_IF2_dom3"/>
</dbReference>
<dbReference type="InterPro" id="IPR036925">
    <property type="entry name" value="TIF_IF2_dom3_sf"/>
</dbReference>
<dbReference type="InterPro" id="IPR009000">
    <property type="entry name" value="Transl_B-barrel_sf"/>
</dbReference>
<dbReference type="NCBIfam" id="TIGR00487">
    <property type="entry name" value="IF-2"/>
    <property type="match status" value="1"/>
</dbReference>
<dbReference type="NCBIfam" id="TIGR00231">
    <property type="entry name" value="small_GTP"/>
    <property type="match status" value="1"/>
</dbReference>
<dbReference type="PANTHER" id="PTHR43381:SF5">
    <property type="entry name" value="TR-TYPE G DOMAIN-CONTAINING PROTEIN"/>
    <property type="match status" value="1"/>
</dbReference>
<dbReference type="PANTHER" id="PTHR43381">
    <property type="entry name" value="TRANSLATION INITIATION FACTOR IF-2-RELATED"/>
    <property type="match status" value="1"/>
</dbReference>
<dbReference type="Pfam" id="PF22042">
    <property type="entry name" value="EF-G_D2"/>
    <property type="match status" value="1"/>
</dbReference>
<dbReference type="Pfam" id="PF00009">
    <property type="entry name" value="GTP_EFTU"/>
    <property type="match status" value="1"/>
</dbReference>
<dbReference type="Pfam" id="PF11987">
    <property type="entry name" value="IF-2"/>
    <property type="match status" value="1"/>
</dbReference>
<dbReference type="Pfam" id="PF04760">
    <property type="entry name" value="IF2_N"/>
    <property type="match status" value="2"/>
</dbReference>
<dbReference type="PRINTS" id="PR00315">
    <property type="entry name" value="ELONGATNFCT"/>
</dbReference>
<dbReference type="SUPFAM" id="SSF52156">
    <property type="entry name" value="Initiation factor IF2/eIF5b, domain 3"/>
    <property type="match status" value="1"/>
</dbReference>
<dbReference type="SUPFAM" id="SSF52540">
    <property type="entry name" value="P-loop containing nucleoside triphosphate hydrolases"/>
    <property type="match status" value="1"/>
</dbReference>
<dbReference type="SUPFAM" id="SSF50447">
    <property type="entry name" value="Translation proteins"/>
    <property type="match status" value="2"/>
</dbReference>
<dbReference type="PROSITE" id="PS51722">
    <property type="entry name" value="G_TR_2"/>
    <property type="match status" value="1"/>
</dbReference>
<keyword id="KW-0963">Cytoplasm</keyword>
<keyword id="KW-0342">GTP-binding</keyword>
<keyword id="KW-0396">Initiation factor</keyword>
<keyword id="KW-0547">Nucleotide-binding</keyword>
<keyword id="KW-0648">Protein biosynthesis</keyword>
<keyword id="KW-1185">Reference proteome</keyword>
<name>IF2_CORU7</name>
<feature type="chain" id="PRO_1000093777" description="Translation initiation factor IF-2">
    <location>
        <begin position="1"/>
        <end position="934"/>
    </location>
</feature>
<feature type="domain" description="tr-type G">
    <location>
        <begin position="430"/>
        <end position="602"/>
    </location>
</feature>
<feature type="region of interest" description="Disordered" evidence="3">
    <location>
        <begin position="54"/>
        <end position="323"/>
    </location>
</feature>
<feature type="region of interest" description="G1" evidence="1">
    <location>
        <begin position="439"/>
        <end position="446"/>
    </location>
</feature>
<feature type="region of interest" description="G2" evidence="1">
    <location>
        <begin position="464"/>
        <end position="468"/>
    </location>
</feature>
<feature type="region of interest" description="G3" evidence="1">
    <location>
        <begin position="489"/>
        <end position="492"/>
    </location>
</feature>
<feature type="region of interest" description="G4" evidence="1">
    <location>
        <begin position="543"/>
        <end position="546"/>
    </location>
</feature>
<feature type="region of interest" description="G5" evidence="1">
    <location>
        <begin position="579"/>
        <end position="581"/>
    </location>
</feature>
<feature type="compositionally biased region" description="Low complexity" evidence="3">
    <location>
        <begin position="80"/>
        <end position="154"/>
    </location>
</feature>
<feature type="compositionally biased region" description="Low complexity" evidence="3">
    <location>
        <begin position="185"/>
        <end position="197"/>
    </location>
</feature>
<feature type="compositionally biased region" description="Low complexity" evidence="3">
    <location>
        <begin position="206"/>
        <end position="231"/>
    </location>
</feature>
<feature type="compositionally biased region" description="Low complexity" evidence="3">
    <location>
        <begin position="238"/>
        <end position="250"/>
    </location>
</feature>
<feature type="compositionally biased region" description="Gly residues" evidence="3">
    <location>
        <begin position="260"/>
        <end position="303"/>
    </location>
</feature>
<feature type="compositionally biased region" description="Basic residues" evidence="3">
    <location>
        <begin position="308"/>
        <end position="317"/>
    </location>
</feature>
<feature type="binding site" evidence="2">
    <location>
        <begin position="439"/>
        <end position="446"/>
    </location>
    <ligand>
        <name>GTP</name>
        <dbReference type="ChEBI" id="CHEBI:37565"/>
    </ligand>
</feature>
<feature type="binding site" evidence="2">
    <location>
        <begin position="489"/>
        <end position="493"/>
    </location>
    <ligand>
        <name>GTP</name>
        <dbReference type="ChEBI" id="CHEBI:37565"/>
    </ligand>
</feature>
<feature type="binding site" evidence="2">
    <location>
        <begin position="543"/>
        <end position="546"/>
    </location>
    <ligand>
        <name>GTP</name>
        <dbReference type="ChEBI" id="CHEBI:37565"/>
    </ligand>
</feature>
<accession>B1VGC2</accession>
<evidence type="ECO:0000250" key="1"/>
<evidence type="ECO:0000255" key="2">
    <source>
        <dbReference type="HAMAP-Rule" id="MF_00100"/>
    </source>
</evidence>
<evidence type="ECO:0000256" key="3">
    <source>
        <dbReference type="SAM" id="MobiDB-lite"/>
    </source>
</evidence>
<gene>
    <name evidence="2" type="primary">infB</name>
    <name type="ordered locus">cu0851</name>
</gene>
<proteinExistence type="inferred from homology"/>
<protein>
    <recommendedName>
        <fullName evidence="2">Translation initiation factor IF-2</fullName>
    </recommendedName>
</protein>
<comment type="function">
    <text evidence="2">One of the essential components for the initiation of protein synthesis. Protects formylmethionyl-tRNA from spontaneous hydrolysis and promotes its binding to the 30S ribosomal subunits. Also involved in the hydrolysis of GTP during the formation of the 70S ribosomal complex.</text>
</comment>
<comment type="subcellular location">
    <subcellularLocation>
        <location evidence="2">Cytoplasm</location>
    </subcellularLocation>
</comment>
<comment type="similarity">
    <text evidence="2">Belongs to the TRAFAC class translation factor GTPase superfamily. Classic translation factor GTPase family. IF-2 subfamily.</text>
</comment>
<organism>
    <name type="scientific">Corynebacterium urealyticum (strain ATCC 43042 / DSM 7109)</name>
    <dbReference type="NCBI Taxonomy" id="504474"/>
    <lineage>
        <taxon>Bacteria</taxon>
        <taxon>Bacillati</taxon>
        <taxon>Actinomycetota</taxon>
        <taxon>Actinomycetes</taxon>
        <taxon>Mycobacteriales</taxon>
        <taxon>Corynebacteriaceae</taxon>
        <taxon>Corynebacterium</taxon>
    </lineage>
</organism>
<sequence length="934" mass="97716">MAGKLRVHELAKKLGVTSKELLATLKEQGEFVKTASSTVEPPVVKKMKQFYGVAQESKPTTPPSPLAQAGSVPDSTQRGPKPGAKPAAKPEAAPKPGTAAAKPSAKPSPAAAAKAAPAAKATPTPAEAAPKPGQAAAKPAAKPGQKPARAAGKPGPKPGPKPGARPQRVANNPFSSTTERPPRPRGGATPGDMPRPGGTRGGAGRGQAPRPGARPAQGQGRGQGTAKPGAARQGGGRRPSPAMMPATPSPGQMPAKSAAGFGGGRGRGGRPGGPGGPGGPGGPGPRGGRGGRRGGTAGAFGRPGGPPRRGRKSKRQKRNEYEAMQAPKVVGGVKLPSGNGEKIRLARGASLADFADKINADAAALVQALFNLGEMVTATQSVSDETLQLLGDEMDYKVEVVSPEDEDRELLESFDLQFGEDEGDDEDLAQRPPVVTVMGHVDHGKTRLLDTIRKENVGSGEAGGITQHIGAYQVSVNMEGVERPVTFLDTPGHEAFTAMRARGAKSTDIAILVVAADDGVMPQTVEAINHAKAAEVPVVVAVNKIDKPTAQPDKIRGQLTEYGLVPEEYGGDTMFVDISAKQGQNIDQLLEAVLLTADASLDLRANPDMDAQGIAIEAHLDRGRGPVATIIVQRGTLRVGDSIVVGDAYGRVRRMIDEHGNDVQEAGPSRPVQVLGLTSVSGAGDNLLVVDEDRTARQIADRRDARRRNALAARSRKRVSLEDLDEVLKETSTLNLILKGDNAGTVEALEDALLKIEVDDEVALNIIDRGVGAVTETNVHLAAASDAVIIGFNVRSEGKATEAANAEGVDIRYYSIIYKAIEEIEAALKGMLKPIYEEKEIGTAEIRQIFKASAVGLIAGCMVETGKVRRNAKVRLVRDGKVISEDATIDSLRREKDDVTEVSHGYECGMVLSYPNIEVGDRIEAYEMVEVPRD</sequence>